<dbReference type="EMBL" id="BX640418">
    <property type="protein sequence ID" value="CAE42773.1"/>
    <property type="molecule type" value="Genomic_DNA"/>
</dbReference>
<dbReference type="RefSeq" id="NP_881128.1">
    <property type="nucleotide sequence ID" value="NC_002929.2"/>
</dbReference>
<dbReference type="RefSeq" id="WP_003814083.1">
    <property type="nucleotide sequence ID" value="NZ_CP039022.1"/>
</dbReference>
<dbReference type="SMR" id="Q7VVY0"/>
<dbReference type="STRING" id="257313.BP2501"/>
<dbReference type="PaxDb" id="257313-BP2501"/>
<dbReference type="GeneID" id="93205273"/>
<dbReference type="KEGG" id="bpe:BP2501"/>
<dbReference type="PATRIC" id="fig|257313.5.peg.2699"/>
<dbReference type="eggNOG" id="COG0576">
    <property type="taxonomic scope" value="Bacteria"/>
</dbReference>
<dbReference type="HOGENOM" id="CLU_057217_6_1_4"/>
<dbReference type="Proteomes" id="UP000002676">
    <property type="component" value="Chromosome"/>
</dbReference>
<dbReference type="GO" id="GO:0005829">
    <property type="term" value="C:cytosol"/>
    <property type="evidence" value="ECO:0007669"/>
    <property type="project" value="TreeGrafter"/>
</dbReference>
<dbReference type="GO" id="GO:0000774">
    <property type="term" value="F:adenyl-nucleotide exchange factor activity"/>
    <property type="evidence" value="ECO:0007669"/>
    <property type="project" value="InterPro"/>
</dbReference>
<dbReference type="GO" id="GO:0042803">
    <property type="term" value="F:protein homodimerization activity"/>
    <property type="evidence" value="ECO:0007669"/>
    <property type="project" value="InterPro"/>
</dbReference>
<dbReference type="GO" id="GO:0051087">
    <property type="term" value="F:protein-folding chaperone binding"/>
    <property type="evidence" value="ECO:0007669"/>
    <property type="project" value="InterPro"/>
</dbReference>
<dbReference type="GO" id="GO:0051082">
    <property type="term" value="F:unfolded protein binding"/>
    <property type="evidence" value="ECO:0007669"/>
    <property type="project" value="TreeGrafter"/>
</dbReference>
<dbReference type="GO" id="GO:0006457">
    <property type="term" value="P:protein folding"/>
    <property type="evidence" value="ECO:0007669"/>
    <property type="project" value="InterPro"/>
</dbReference>
<dbReference type="CDD" id="cd00446">
    <property type="entry name" value="GrpE"/>
    <property type="match status" value="1"/>
</dbReference>
<dbReference type="Gene3D" id="3.90.20.20">
    <property type="match status" value="1"/>
</dbReference>
<dbReference type="Gene3D" id="2.30.22.10">
    <property type="entry name" value="Head domain of nucleotide exchange factor GrpE"/>
    <property type="match status" value="1"/>
</dbReference>
<dbReference type="HAMAP" id="MF_01151">
    <property type="entry name" value="GrpE"/>
    <property type="match status" value="1"/>
</dbReference>
<dbReference type="InterPro" id="IPR000740">
    <property type="entry name" value="GrpE"/>
</dbReference>
<dbReference type="InterPro" id="IPR013805">
    <property type="entry name" value="GrpE_coiled_coil"/>
</dbReference>
<dbReference type="InterPro" id="IPR009012">
    <property type="entry name" value="GrpE_head"/>
</dbReference>
<dbReference type="NCBIfam" id="NF010737">
    <property type="entry name" value="PRK14139.1"/>
    <property type="match status" value="1"/>
</dbReference>
<dbReference type="NCBIfam" id="NF010748">
    <property type="entry name" value="PRK14150.1"/>
    <property type="match status" value="1"/>
</dbReference>
<dbReference type="PANTHER" id="PTHR21237">
    <property type="entry name" value="GRPE PROTEIN"/>
    <property type="match status" value="1"/>
</dbReference>
<dbReference type="PANTHER" id="PTHR21237:SF23">
    <property type="entry name" value="GRPE PROTEIN HOMOLOG, MITOCHONDRIAL"/>
    <property type="match status" value="1"/>
</dbReference>
<dbReference type="Pfam" id="PF01025">
    <property type="entry name" value="GrpE"/>
    <property type="match status" value="1"/>
</dbReference>
<dbReference type="PRINTS" id="PR00773">
    <property type="entry name" value="GRPEPROTEIN"/>
</dbReference>
<dbReference type="SUPFAM" id="SSF58014">
    <property type="entry name" value="Coiled-coil domain of nucleotide exchange factor GrpE"/>
    <property type="match status" value="1"/>
</dbReference>
<dbReference type="SUPFAM" id="SSF51064">
    <property type="entry name" value="Head domain of nucleotide exchange factor GrpE"/>
    <property type="match status" value="1"/>
</dbReference>
<dbReference type="PROSITE" id="PS01071">
    <property type="entry name" value="GRPE"/>
    <property type="match status" value="1"/>
</dbReference>
<evidence type="ECO:0000255" key="1">
    <source>
        <dbReference type="HAMAP-Rule" id="MF_01151"/>
    </source>
</evidence>
<evidence type="ECO:0000256" key="2">
    <source>
        <dbReference type="SAM" id="MobiDB-lite"/>
    </source>
</evidence>
<gene>
    <name evidence="1" type="primary">grpE</name>
    <name type="ordered locus">BP2501</name>
</gene>
<name>GRPE_BORPE</name>
<comment type="function">
    <text evidence="1">Participates actively in the response to hyperosmotic and heat shock by preventing the aggregation of stress-denatured proteins, in association with DnaK and GrpE. It is the nucleotide exchange factor for DnaK and may function as a thermosensor. Unfolded proteins bind initially to DnaJ; upon interaction with the DnaJ-bound protein, DnaK hydrolyzes its bound ATP, resulting in the formation of a stable complex. GrpE releases ADP from DnaK; ATP binding to DnaK triggers the release of the substrate protein, thus completing the reaction cycle. Several rounds of ATP-dependent interactions between DnaJ, DnaK and GrpE are required for fully efficient folding.</text>
</comment>
<comment type="subunit">
    <text evidence="1">Homodimer.</text>
</comment>
<comment type="subcellular location">
    <subcellularLocation>
        <location evidence="1">Cytoplasm</location>
    </subcellularLocation>
</comment>
<comment type="similarity">
    <text evidence="1">Belongs to the GrpE family.</text>
</comment>
<accession>Q7VVY0</accession>
<keyword id="KW-0143">Chaperone</keyword>
<keyword id="KW-0963">Cytoplasm</keyword>
<keyword id="KW-1185">Reference proteome</keyword>
<keyword id="KW-0346">Stress response</keyword>
<organism>
    <name type="scientific">Bordetella pertussis (strain Tohama I / ATCC BAA-589 / NCTC 13251)</name>
    <dbReference type="NCBI Taxonomy" id="257313"/>
    <lineage>
        <taxon>Bacteria</taxon>
        <taxon>Pseudomonadati</taxon>
        <taxon>Pseudomonadota</taxon>
        <taxon>Betaproteobacteria</taxon>
        <taxon>Burkholderiales</taxon>
        <taxon>Alcaligenaceae</taxon>
        <taxon>Bordetella</taxon>
    </lineage>
</organism>
<reference key="1">
    <citation type="journal article" date="2003" name="Nat. Genet.">
        <title>Comparative analysis of the genome sequences of Bordetella pertussis, Bordetella parapertussis and Bordetella bronchiseptica.</title>
        <authorList>
            <person name="Parkhill J."/>
            <person name="Sebaihia M."/>
            <person name="Preston A."/>
            <person name="Murphy L.D."/>
            <person name="Thomson N.R."/>
            <person name="Harris D.E."/>
            <person name="Holden M.T.G."/>
            <person name="Churcher C.M."/>
            <person name="Bentley S.D."/>
            <person name="Mungall K.L."/>
            <person name="Cerdeno-Tarraga A.-M."/>
            <person name="Temple L."/>
            <person name="James K.D."/>
            <person name="Harris B."/>
            <person name="Quail M.A."/>
            <person name="Achtman M."/>
            <person name="Atkin R."/>
            <person name="Baker S."/>
            <person name="Basham D."/>
            <person name="Bason N."/>
            <person name="Cherevach I."/>
            <person name="Chillingworth T."/>
            <person name="Collins M."/>
            <person name="Cronin A."/>
            <person name="Davis P."/>
            <person name="Doggett J."/>
            <person name="Feltwell T."/>
            <person name="Goble A."/>
            <person name="Hamlin N."/>
            <person name="Hauser H."/>
            <person name="Holroyd S."/>
            <person name="Jagels K."/>
            <person name="Leather S."/>
            <person name="Moule S."/>
            <person name="Norberczak H."/>
            <person name="O'Neil S."/>
            <person name="Ormond D."/>
            <person name="Price C."/>
            <person name="Rabbinowitsch E."/>
            <person name="Rutter S."/>
            <person name="Sanders M."/>
            <person name="Saunders D."/>
            <person name="Seeger K."/>
            <person name="Sharp S."/>
            <person name="Simmonds M."/>
            <person name="Skelton J."/>
            <person name="Squares R."/>
            <person name="Squares S."/>
            <person name="Stevens K."/>
            <person name="Unwin L."/>
            <person name="Whitehead S."/>
            <person name="Barrell B.G."/>
            <person name="Maskell D.J."/>
        </authorList>
    </citation>
    <scope>NUCLEOTIDE SEQUENCE [LARGE SCALE GENOMIC DNA]</scope>
    <source>
        <strain>Tohama I / ATCC BAA-589 / NCTC 13251</strain>
    </source>
</reference>
<sequence length="184" mass="19625">MTAPQEPVDSTPESGENAATPGLEDDLSAELAALRAELEAAQATVKAQQEQVLRAAAEAENVRRRAQEDVAKARKFGIESFAESLVPVKDSLEAALAQPDQAAQAWREGVEVTLKQLTAAFERNLLKEIAPAQGDKFDPHLHQAISSVPADQPANTVLQLLQKGYVIADRTLRPALVVVSAGQG</sequence>
<proteinExistence type="inferred from homology"/>
<protein>
    <recommendedName>
        <fullName evidence="1">Protein GrpE</fullName>
    </recommendedName>
    <alternativeName>
        <fullName evidence="1">HSP-70 cofactor</fullName>
    </alternativeName>
</protein>
<feature type="chain" id="PRO_0000113752" description="Protein GrpE">
    <location>
        <begin position="1"/>
        <end position="184"/>
    </location>
</feature>
<feature type="region of interest" description="Disordered" evidence="2">
    <location>
        <begin position="1"/>
        <end position="26"/>
    </location>
</feature>